<feature type="chain" id="PRO_1000064215" description="Glycerol-3-phosphate acyltransferase">
    <location>
        <begin position="1"/>
        <end position="201"/>
    </location>
</feature>
<feature type="transmembrane region" description="Helical" evidence="1">
    <location>
        <begin position="10"/>
        <end position="30"/>
    </location>
</feature>
<feature type="transmembrane region" description="Helical" evidence="1">
    <location>
        <begin position="59"/>
        <end position="79"/>
    </location>
</feature>
<feature type="transmembrane region" description="Helical" evidence="1">
    <location>
        <begin position="87"/>
        <end position="107"/>
    </location>
</feature>
<feature type="transmembrane region" description="Helical" evidence="1">
    <location>
        <begin position="116"/>
        <end position="136"/>
    </location>
</feature>
<feature type="transmembrane region" description="Helical" evidence="1">
    <location>
        <begin position="161"/>
        <end position="181"/>
    </location>
</feature>
<comment type="function">
    <text evidence="1">Catalyzes the transfer of an acyl group from acyl-phosphate (acyl-PO(4)) to glycerol-3-phosphate (G3P) to form lysophosphatidic acid (LPA). This enzyme utilizes acyl-phosphate as fatty acyl donor, but not acyl-CoA or acyl-ACP.</text>
</comment>
<comment type="catalytic activity">
    <reaction evidence="1">
        <text>an acyl phosphate + sn-glycerol 3-phosphate = a 1-acyl-sn-glycero-3-phosphate + phosphate</text>
        <dbReference type="Rhea" id="RHEA:34075"/>
        <dbReference type="ChEBI" id="CHEBI:43474"/>
        <dbReference type="ChEBI" id="CHEBI:57597"/>
        <dbReference type="ChEBI" id="CHEBI:57970"/>
        <dbReference type="ChEBI" id="CHEBI:59918"/>
        <dbReference type="EC" id="2.3.1.275"/>
    </reaction>
</comment>
<comment type="pathway">
    <text evidence="1">Lipid metabolism; phospholipid metabolism.</text>
</comment>
<comment type="subunit">
    <text evidence="1">Probably interacts with PlsX.</text>
</comment>
<comment type="subcellular location">
    <subcellularLocation>
        <location evidence="1">Cell inner membrane</location>
        <topology evidence="1">Multi-pass membrane protein</topology>
    </subcellularLocation>
</comment>
<comment type="similarity">
    <text evidence="1">Belongs to the PlsY family.</text>
</comment>
<gene>
    <name evidence="1" type="primary">plsY</name>
    <name type="ordered locus">Rsph17029_2664</name>
</gene>
<keyword id="KW-0997">Cell inner membrane</keyword>
<keyword id="KW-1003">Cell membrane</keyword>
<keyword id="KW-0444">Lipid biosynthesis</keyword>
<keyword id="KW-0443">Lipid metabolism</keyword>
<keyword id="KW-0472">Membrane</keyword>
<keyword id="KW-0594">Phospholipid biosynthesis</keyword>
<keyword id="KW-1208">Phospholipid metabolism</keyword>
<keyword id="KW-0808">Transferase</keyword>
<keyword id="KW-0812">Transmembrane</keyword>
<keyword id="KW-1133">Transmembrane helix</keyword>
<sequence>MPAIESGLWALILTGVLGYLLGSIPFGIVITRALGLGDLRKIGSGNIGATNVLRTGNKPAALATLLLDSGKGAIAVLIARAAVGEDAAQLAAFTSFLGHLFPVWLGFRGGKGVATFLGTLLALAWPVGLACCLTWLATAALGRISSLSALVAAASGVLWMILLGYGQMAALGAVLAVLIFIRHHANIRRILAGTEPRIGKK</sequence>
<evidence type="ECO:0000255" key="1">
    <source>
        <dbReference type="HAMAP-Rule" id="MF_01043"/>
    </source>
</evidence>
<proteinExistence type="inferred from homology"/>
<reference key="1">
    <citation type="submission" date="2007-02" db="EMBL/GenBank/DDBJ databases">
        <title>Complete sequence of chromosome 1 of Rhodobacter sphaeroides ATCC 17029.</title>
        <authorList>
            <person name="Copeland A."/>
            <person name="Lucas S."/>
            <person name="Lapidus A."/>
            <person name="Barry K."/>
            <person name="Detter J.C."/>
            <person name="Glavina del Rio T."/>
            <person name="Hammon N."/>
            <person name="Israni S."/>
            <person name="Dalin E."/>
            <person name="Tice H."/>
            <person name="Pitluck S."/>
            <person name="Kiss H."/>
            <person name="Brettin T."/>
            <person name="Bruce D."/>
            <person name="Han C."/>
            <person name="Tapia R."/>
            <person name="Gilna P."/>
            <person name="Schmutz J."/>
            <person name="Larimer F."/>
            <person name="Land M."/>
            <person name="Hauser L."/>
            <person name="Kyrpides N."/>
            <person name="Mikhailova N."/>
            <person name="Richardson P."/>
            <person name="Mackenzie C."/>
            <person name="Choudhary M."/>
            <person name="Donohue T.J."/>
            <person name="Kaplan S."/>
        </authorList>
    </citation>
    <scope>NUCLEOTIDE SEQUENCE [LARGE SCALE GENOMIC DNA]</scope>
    <source>
        <strain>ATCC 17029 / ATH 2.4.9</strain>
    </source>
</reference>
<organism>
    <name type="scientific">Cereibacter sphaeroides (strain ATCC 17029 / ATH 2.4.9)</name>
    <name type="common">Rhodobacter sphaeroides</name>
    <dbReference type="NCBI Taxonomy" id="349101"/>
    <lineage>
        <taxon>Bacteria</taxon>
        <taxon>Pseudomonadati</taxon>
        <taxon>Pseudomonadota</taxon>
        <taxon>Alphaproteobacteria</taxon>
        <taxon>Rhodobacterales</taxon>
        <taxon>Paracoccaceae</taxon>
        <taxon>Cereibacter</taxon>
    </lineage>
</organism>
<dbReference type="EC" id="2.3.1.275" evidence="1"/>
<dbReference type="EMBL" id="CP000577">
    <property type="protein sequence ID" value="ABN77766.1"/>
    <property type="molecule type" value="Genomic_DNA"/>
</dbReference>
<dbReference type="RefSeq" id="WP_009563048.1">
    <property type="nucleotide sequence ID" value="NC_009049.1"/>
</dbReference>
<dbReference type="SMR" id="A3PN50"/>
<dbReference type="GeneID" id="67447776"/>
<dbReference type="KEGG" id="rsh:Rsph17029_2664"/>
<dbReference type="HOGENOM" id="CLU_081254_1_0_5"/>
<dbReference type="UniPathway" id="UPA00085"/>
<dbReference type="GO" id="GO:0005886">
    <property type="term" value="C:plasma membrane"/>
    <property type="evidence" value="ECO:0007669"/>
    <property type="project" value="UniProtKB-SubCell"/>
</dbReference>
<dbReference type="GO" id="GO:0043772">
    <property type="term" value="F:acyl-phosphate glycerol-3-phosphate acyltransferase activity"/>
    <property type="evidence" value="ECO:0007669"/>
    <property type="project" value="UniProtKB-UniRule"/>
</dbReference>
<dbReference type="GO" id="GO:0008654">
    <property type="term" value="P:phospholipid biosynthetic process"/>
    <property type="evidence" value="ECO:0007669"/>
    <property type="project" value="UniProtKB-UniRule"/>
</dbReference>
<dbReference type="HAMAP" id="MF_01043">
    <property type="entry name" value="PlsY"/>
    <property type="match status" value="1"/>
</dbReference>
<dbReference type="InterPro" id="IPR003811">
    <property type="entry name" value="G3P_acylTferase_PlsY"/>
</dbReference>
<dbReference type="NCBIfam" id="TIGR00023">
    <property type="entry name" value="glycerol-3-phosphate 1-O-acyltransferase PlsY"/>
    <property type="match status" value="1"/>
</dbReference>
<dbReference type="PANTHER" id="PTHR30309:SF0">
    <property type="entry name" value="GLYCEROL-3-PHOSPHATE ACYLTRANSFERASE-RELATED"/>
    <property type="match status" value="1"/>
</dbReference>
<dbReference type="PANTHER" id="PTHR30309">
    <property type="entry name" value="INNER MEMBRANE PROTEIN YGIH"/>
    <property type="match status" value="1"/>
</dbReference>
<dbReference type="Pfam" id="PF02660">
    <property type="entry name" value="G3P_acyltransf"/>
    <property type="match status" value="1"/>
</dbReference>
<dbReference type="SMART" id="SM01207">
    <property type="entry name" value="G3P_acyltransf"/>
    <property type="match status" value="1"/>
</dbReference>
<protein>
    <recommendedName>
        <fullName evidence="1">Glycerol-3-phosphate acyltransferase</fullName>
    </recommendedName>
    <alternativeName>
        <fullName evidence="1">Acyl-PO4 G3P acyltransferase</fullName>
    </alternativeName>
    <alternativeName>
        <fullName evidence="1">Acyl-phosphate--glycerol-3-phosphate acyltransferase</fullName>
    </alternativeName>
    <alternativeName>
        <fullName evidence="1">G3P acyltransferase</fullName>
        <shortName evidence="1">GPAT</shortName>
        <ecNumber evidence="1">2.3.1.275</ecNumber>
    </alternativeName>
    <alternativeName>
        <fullName evidence="1">Lysophosphatidic acid synthase</fullName>
        <shortName evidence="1">LPA synthase</shortName>
    </alternativeName>
</protein>
<name>PLSY_CERS1</name>
<accession>A3PN50</accession>